<gene>
    <name evidence="1" type="primary">mraY</name>
    <name type="ordered locus">Ppro_3292</name>
</gene>
<comment type="function">
    <text evidence="1">Catalyzes the initial step of the lipid cycle reactions in the biosynthesis of the cell wall peptidoglycan: transfers peptidoglycan precursor phospho-MurNAc-pentapeptide from UDP-MurNAc-pentapeptide onto the lipid carrier undecaprenyl phosphate, yielding undecaprenyl-pyrophosphoryl-MurNAc-pentapeptide, known as lipid I.</text>
</comment>
<comment type="catalytic activity">
    <reaction evidence="1">
        <text>UDP-N-acetyl-alpha-D-muramoyl-L-alanyl-gamma-D-glutamyl-meso-2,6-diaminopimeloyl-D-alanyl-D-alanine + di-trans,octa-cis-undecaprenyl phosphate = di-trans,octa-cis-undecaprenyl diphospho-N-acetyl-alpha-D-muramoyl-L-alanyl-D-glutamyl-meso-2,6-diaminopimeloyl-D-alanyl-D-alanine + UMP</text>
        <dbReference type="Rhea" id="RHEA:28386"/>
        <dbReference type="ChEBI" id="CHEBI:57865"/>
        <dbReference type="ChEBI" id="CHEBI:60392"/>
        <dbReference type="ChEBI" id="CHEBI:61386"/>
        <dbReference type="ChEBI" id="CHEBI:61387"/>
        <dbReference type="EC" id="2.7.8.13"/>
    </reaction>
</comment>
<comment type="cofactor">
    <cofactor evidence="1">
        <name>Mg(2+)</name>
        <dbReference type="ChEBI" id="CHEBI:18420"/>
    </cofactor>
</comment>
<comment type="pathway">
    <text evidence="1">Cell wall biogenesis; peptidoglycan biosynthesis.</text>
</comment>
<comment type="subcellular location">
    <subcellularLocation>
        <location evidence="1">Cell inner membrane</location>
        <topology evidence="1">Multi-pass membrane protein</topology>
    </subcellularLocation>
</comment>
<comment type="similarity">
    <text evidence="1">Belongs to the glycosyltransferase 4 family. MraY subfamily.</text>
</comment>
<keyword id="KW-0131">Cell cycle</keyword>
<keyword id="KW-0132">Cell division</keyword>
<keyword id="KW-0997">Cell inner membrane</keyword>
<keyword id="KW-1003">Cell membrane</keyword>
<keyword id="KW-0133">Cell shape</keyword>
<keyword id="KW-0961">Cell wall biogenesis/degradation</keyword>
<keyword id="KW-0460">Magnesium</keyword>
<keyword id="KW-0472">Membrane</keyword>
<keyword id="KW-0479">Metal-binding</keyword>
<keyword id="KW-0573">Peptidoglycan synthesis</keyword>
<keyword id="KW-1185">Reference proteome</keyword>
<keyword id="KW-0808">Transferase</keyword>
<keyword id="KW-0812">Transmembrane</keyword>
<keyword id="KW-1133">Transmembrane helix</keyword>
<evidence type="ECO:0000255" key="1">
    <source>
        <dbReference type="HAMAP-Rule" id="MF_00038"/>
    </source>
</evidence>
<organism>
    <name type="scientific">Pelobacter propionicus (strain DSM 2379 / NBRC 103807 / OttBd1)</name>
    <dbReference type="NCBI Taxonomy" id="338966"/>
    <lineage>
        <taxon>Bacteria</taxon>
        <taxon>Pseudomonadati</taxon>
        <taxon>Thermodesulfobacteriota</taxon>
        <taxon>Desulfuromonadia</taxon>
        <taxon>Desulfuromonadales</taxon>
        <taxon>Desulfuromonadaceae</taxon>
        <taxon>Pelobacter</taxon>
    </lineage>
</organism>
<name>MRAY_PELPD</name>
<proteinExistence type="inferred from homology"/>
<sequence>MLYHLLYPLAGDVKLFNIFKYLTFRTIYAMITALLVCFVLGPWVIRVLEGLQARQVIRTDGPESHLQKQGTPTMGGVMILAAIVIPTLLWADLSNQYIWTVLFITIGYGLIGFVDDYKKVVEKNPKGLSPRQKMFWQVLLAGAVGTFLFLKPGFNAQLFVPFFKNFHPDLWFWYIPFVTLVIVGASNAVNLTDGLDGLAIGPVAINAATYMLFSYVAGHATLSAYLQVPRVAGAGELAVLCGAMVGAGLGFLWYNSYPAEVFMGDVGSLSLGGTLGAIAVITKQEILLVIVGGIFVIEALSVIFQVGSYKYRGKRIFRMAPIHHHFELKGVAEPKIIVRFWIITIILALVAISTLKMR</sequence>
<protein>
    <recommendedName>
        <fullName evidence="1">Phospho-N-acetylmuramoyl-pentapeptide-transferase</fullName>
        <ecNumber evidence="1">2.7.8.13</ecNumber>
    </recommendedName>
    <alternativeName>
        <fullName evidence="1">UDP-MurNAc-pentapeptide phosphotransferase</fullName>
    </alternativeName>
</protein>
<dbReference type="EC" id="2.7.8.13" evidence="1"/>
<dbReference type="EMBL" id="CP000482">
    <property type="protein sequence ID" value="ABL00885.1"/>
    <property type="molecule type" value="Genomic_DNA"/>
</dbReference>
<dbReference type="RefSeq" id="WP_011737102.1">
    <property type="nucleotide sequence ID" value="NC_008609.1"/>
</dbReference>
<dbReference type="SMR" id="A1AU64"/>
<dbReference type="STRING" id="338966.Ppro_3292"/>
<dbReference type="KEGG" id="ppd:Ppro_3292"/>
<dbReference type="eggNOG" id="COG0472">
    <property type="taxonomic scope" value="Bacteria"/>
</dbReference>
<dbReference type="HOGENOM" id="CLU_023982_0_0_7"/>
<dbReference type="OrthoDB" id="9805475at2"/>
<dbReference type="UniPathway" id="UPA00219"/>
<dbReference type="Proteomes" id="UP000006732">
    <property type="component" value="Chromosome"/>
</dbReference>
<dbReference type="GO" id="GO:0005886">
    <property type="term" value="C:plasma membrane"/>
    <property type="evidence" value="ECO:0007669"/>
    <property type="project" value="UniProtKB-SubCell"/>
</dbReference>
<dbReference type="GO" id="GO:0046872">
    <property type="term" value="F:metal ion binding"/>
    <property type="evidence" value="ECO:0007669"/>
    <property type="project" value="UniProtKB-KW"/>
</dbReference>
<dbReference type="GO" id="GO:0008963">
    <property type="term" value="F:phospho-N-acetylmuramoyl-pentapeptide-transferase activity"/>
    <property type="evidence" value="ECO:0007669"/>
    <property type="project" value="UniProtKB-UniRule"/>
</dbReference>
<dbReference type="GO" id="GO:0051992">
    <property type="term" value="F:UDP-N-acetylmuramoyl-L-alanyl-D-glutamyl-meso-2,6-diaminopimelyl-D-alanyl-D-alanine:undecaprenyl-phosphate transferase activity"/>
    <property type="evidence" value="ECO:0007669"/>
    <property type="project" value="RHEA"/>
</dbReference>
<dbReference type="GO" id="GO:0051301">
    <property type="term" value="P:cell division"/>
    <property type="evidence" value="ECO:0007669"/>
    <property type="project" value="UniProtKB-KW"/>
</dbReference>
<dbReference type="GO" id="GO:0071555">
    <property type="term" value="P:cell wall organization"/>
    <property type="evidence" value="ECO:0007669"/>
    <property type="project" value="UniProtKB-KW"/>
</dbReference>
<dbReference type="GO" id="GO:0009252">
    <property type="term" value="P:peptidoglycan biosynthetic process"/>
    <property type="evidence" value="ECO:0007669"/>
    <property type="project" value="UniProtKB-UniRule"/>
</dbReference>
<dbReference type="GO" id="GO:0008360">
    <property type="term" value="P:regulation of cell shape"/>
    <property type="evidence" value="ECO:0007669"/>
    <property type="project" value="UniProtKB-KW"/>
</dbReference>
<dbReference type="CDD" id="cd06852">
    <property type="entry name" value="GT_MraY"/>
    <property type="match status" value="1"/>
</dbReference>
<dbReference type="HAMAP" id="MF_00038">
    <property type="entry name" value="MraY"/>
    <property type="match status" value="1"/>
</dbReference>
<dbReference type="InterPro" id="IPR000715">
    <property type="entry name" value="Glycosyl_transferase_4"/>
</dbReference>
<dbReference type="InterPro" id="IPR003524">
    <property type="entry name" value="PNAcMuramoyl-5peptid_Trfase"/>
</dbReference>
<dbReference type="InterPro" id="IPR018480">
    <property type="entry name" value="PNAcMuramoyl-5peptid_Trfase_CS"/>
</dbReference>
<dbReference type="NCBIfam" id="TIGR00445">
    <property type="entry name" value="mraY"/>
    <property type="match status" value="1"/>
</dbReference>
<dbReference type="PANTHER" id="PTHR22926">
    <property type="entry name" value="PHOSPHO-N-ACETYLMURAMOYL-PENTAPEPTIDE-TRANSFERASE"/>
    <property type="match status" value="1"/>
</dbReference>
<dbReference type="PANTHER" id="PTHR22926:SF5">
    <property type="entry name" value="PHOSPHO-N-ACETYLMURAMOYL-PENTAPEPTIDE-TRANSFERASE HOMOLOG"/>
    <property type="match status" value="1"/>
</dbReference>
<dbReference type="Pfam" id="PF00953">
    <property type="entry name" value="Glycos_transf_4"/>
    <property type="match status" value="1"/>
</dbReference>
<dbReference type="Pfam" id="PF10555">
    <property type="entry name" value="MraY_sig1"/>
    <property type="match status" value="1"/>
</dbReference>
<dbReference type="PROSITE" id="PS01347">
    <property type="entry name" value="MRAY_1"/>
    <property type="match status" value="1"/>
</dbReference>
<dbReference type="PROSITE" id="PS01348">
    <property type="entry name" value="MRAY_2"/>
    <property type="match status" value="1"/>
</dbReference>
<accession>A1AU64</accession>
<feature type="chain" id="PRO_1000003027" description="Phospho-N-acetylmuramoyl-pentapeptide-transferase">
    <location>
        <begin position="1"/>
        <end position="358"/>
    </location>
</feature>
<feature type="transmembrane region" description="Helical" evidence="1">
    <location>
        <begin position="27"/>
        <end position="47"/>
    </location>
</feature>
<feature type="transmembrane region" description="Helical" evidence="1">
    <location>
        <begin position="73"/>
        <end position="93"/>
    </location>
</feature>
<feature type="transmembrane region" description="Helical" evidence="1">
    <location>
        <begin position="97"/>
        <end position="117"/>
    </location>
</feature>
<feature type="transmembrane region" description="Helical" evidence="1">
    <location>
        <begin position="134"/>
        <end position="154"/>
    </location>
</feature>
<feature type="transmembrane region" description="Helical" evidence="1">
    <location>
        <begin position="170"/>
        <end position="190"/>
    </location>
</feature>
<feature type="transmembrane region" description="Helical" evidence="1">
    <location>
        <begin position="197"/>
        <end position="217"/>
    </location>
</feature>
<feature type="transmembrane region" description="Helical" evidence="1">
    <location>
        <begin position="233"/>
        <end position="253"/>
    </location>
</feature>
<feature type="transmembrane region" description="Helical" evidence="1">
    <location>
        <begin position="261"/>
        <end position="281"/>
    </location>
</feature>
<feature type="transmembrane region" description="Helical" evidence="1">
    <location>
        <begin position="286"/>
        <end position="306"/>
    </location>
</feature>
<feature type="transmembrane region" description="Helical" evidence="1">
    <location>
        <begin position="335"/>
        <end position="355"/>
    </location>
</feature>
<reference key="1">
    <citation type="submission" date="2006-10" db="EMBL/GenBank/DDBJ databases">
        <title>Complete sequence of chromosome of Pelobacter propionicus DSM 2379.</title>
        <authorList>
            <consortium name="US DOE Joint Genome Institute"/>
            <person name="Copeland A."/>
            <person name="Lucas S."/>
            <person name="Lapidus A."/>
            <person name="Barry K."/>
            <person name="Detter J.C."/>
            <person name="Glavina del Rio T."/>
            <person name="Hammon N."/>
            <person name="Israni S."/>
            <person name="Dalin E."/>
            <person name="Tice H."/>
            <person name="Pitluck S."/>
            <person name="Saunders E."/>
            <person name="Brettin T."/>
            <person name="Bruce D."/>
            <person name="Han C."/>
            <person name="Tapia R."/>
            <person name="Schmutz J."/>
            <person name="Larimer F."/>
            <person name="Land M."/>
            <person name="Hauser L."/>
            <person name="Kyrpides N."/>
            <person name="Kim E."/>
            <person name="Lovley D."/>
            <person name="Richardson P."/>
        </authorList>
    </citation>
    <scope>NUCLEOTIDE SEQUENCE [LARGE SCALE GENOMIC DNA]</scope>
    <source>
        <strain>DSM 2379 / NBRC 103807 / OttBd1</strain>
    </source>
</reference>